<name>MRAZ_XYLFT</name>
<protein>
    <recommendedName>
        <fullName>Transcriptional regulator MraZ</fullName>
    </recommendedName>
</protein>
<keyword id="KW-0963">Cytoplasm</keyword>
<keyword id="KW-0238">DNA-binding</keyword>
<keyword id="KW-1185">Reference proteome</keyword>
<keyword id="KW-0677">Repeat</keyword>
<keyword id="KW-0804">Transcription</keyword>
<keyword id="KW-0805">Transcription regulation</keyword>
<reference key="1">
    <citation type="journal article" date="2003" name="J. Bacteriol.">
        <title>Comparative analyses of the complete genome sequences of Pierce's disease and citrus variegated chlorosis strains of Xylella fastidiosa.</title>
        <authorList>
            <person name="Van Sluys M.A."/>
            <person name="de Oliveira M.C."/>
            <person name="Monteiro-Vitorello C.B."/>
            <person name="Miyaki C.Y."/>
            <person name="Furlan L.R."/>
            <person name="Camargo L.E.A."/>
            <person name="da Silva A.C.R."/>
            <person name="Moon D.H."/>
            <person name="Takita M.A."/>
            <person name="Lemos E.G.M."/>
            <person name="Machado M.A."/>
            <person name="Ferro M.I.T."/>
            <person name="da Silva F.R."/>
            <person name="Goldman M.H.S."/>
            <person name="Goldman G.H."/>
            <person name="Lemos M.V.F."/>
            <person name="El-Dorry H."/>
            <person name="Tsai S.M."/>
            <person name="Carrer H."/>
            <person name="Carraro D.M."/>
            <person name="de Oliveira R.C."/>
            <person name="Nunes L.R."/>
            <person name="Siqueira W.J."/>
            <person name="Coutinho L.L."/>
            <person name="Kimura E.T."/>
            <person name="Ferro E.S."/>
            <person name="Harakava R."/>
            <person name="Kuramae E.E."/>
            <person name="Marino C.L."/>
            <person name="Giglioti E."/>
            <person name="Abreu I.L."/>
            <person name="Alves L.M.C."/>
            <person name="do Amaral A.M."/>
            <person name="Baia G.S."/>
            <person name="Blanco S.R."/>
            <person name="Brito M.S."/>
            <person name="Cannavan F.S."/>
            <person name="Celestino A.V."/>
            <person name="da Cunha A.F."/>
            <person name="Fenille R.C."/>
            <person name="Ferro J.A."/>
            <person name="Formighieri E.F."/>
            <person name="Kishi L.T."/>
            <person name="Leoni S.G."/>
            <person name="Oliveira A.R."/>
            <person name="Rosa V.E. Jr."/>
            <person name="Sassaki F.T."/>
            <person name="Sena J.A.D."/>
            <person name="de Souza A.A."/>
            <person name="Truffi D."/>
            <person name="Tsukumo F."/>
            <person name="Yanai G.M."/>
            <person name="Zaros L.G."/>
            <person name="Civerolo E.L."/>
            <person name="Simpson A.J.G."/>
            <person name="Almeida N.F. Jr."/>
            <person name="Setubal J.C."/>
            <person name="Kitajima J.P."/>
        </authorList>
    </citation>
    <scope>NUCLEOTIDE SEQUENCE [LARGE SCALE GENOMIC DNA]</scope>
    <source>
        <strain>Temecula1 / ATCC 700964</strain>
    </source>
</reference>
<dbReference type="EMBL" id="AE009442">
    <property type="protein sequence ID" value="AAO29706.1"/>
    <property type="molecule type" value="Genomic_DNA"/>
</dbReference>
<dbReference type="SMR" id="Q87AF1"/>
<dbReference type="KEGG" id="xft:PD_1874"/>
<dbReference type="HOGENOM" id="CLU_107907_2_0_6"/>
<dbReference type="Proteomes" id="UP000002516">
    <property type="component" value="Chromosome"/>
</dbReference>
<dbReference type="GO" id="GO:0005737">
    <property type="term" value="C:cytoplasm"/>
    <property type="evidence" value="ECO:0007669"/>
    <property type="project" value="UniProtKB-UniRule"/>
</dbReference>
<dbReference type="GO" id="GO:0009295">
    <property type="term" value="C:nucleoid"/>
    <property type="evidence" value="ECO:0007669"/>
    <property type="project" value="UniProtKB-SubCell"/>
</dbReference>
<dbReference type="GO" id="GO:0003700">
    <property type="term" value="F:DNA-binding transcription factor activity"/>
    <property type="evidence" value="ECO:0007669"/>
    <property type="project" value="UniProtKB-UniRule"/>
</dbReference>
<dbReference type="GO" id="GO:0000976">
    <property type="term" value="F:transcription cis-regulatory region binding"/>
    <property type="evidence" value="ECO:0007669"/>
    <property type="project" value="TreeGrafter"/>
</dbReference>
<dbReference type="GO" id="GO:2000143">
    <property type="term" value="P:negative regulation of DNA-templated transcription initiation"/>
    <property type="evidence" value="ECO:0007669"/>
    <property type="project" value="TreeGrafter"/>
</dbReference>
<dbReference type="CDD" id="cd16321">
    <property type="entry name" value="MraZ_C"/>
    <property type="match status" value="1"/>
</dbReference>
<dbReference type="CDD" id="cd16320">
    <property type="entry name" value="MraZ_N"/>
    <property type="match status" value="1"/>
</dbReference>
<dbReference type="Gene3D" id="3.40.1550.20">
    <property type="entry name" value="Transcriptional regulator MraZ domain"/>
    <property type="match status" value="1"/>
</dbReference>
<dbReference type="HAMAP" id="MF_01008">
    <property type="entry name" value="MraZ"/>
    <property type="match status" value="1"/>
</dbReference>
<dbReference type="InterPro" id="IPR003444">
    <property type="entry name" value="MraZ"/>
</dbReference>
<dbReference type="InterPro" id="IPR035644">
    <property type="entry name" value="MraZ_C"/>
</dbReference>
<dbReference type="InterPro" id="IPR020603">
    <property type="entry name" value="MraZ_dom"/>
</dbReference>
<dbReference type="InterPro" id="IPR035642">
    <property type="entry name" value="MraZ_N"/>
</dbReference>
<dbReference type="InterPro" id="IPR038619">
    <property type="entry name" value="MraZ_sf"/>
</dbReference>
<dbReference type="InterPro" id="IPR007159">
    <property type="entry name" value="SpoVT-AbrB_dom"/>
</dbReference>
<dbReference type="InterPro" id="IPR037914">
    <property type="entry name" value="SpoVT-AbrB_sf"/>
</dbReference>
<dbReference type="PANTHER" id="PTHR34701">
    <property type="entry name" value="TRANSCRIPTIONAL REGULATOR MRAZ"/>
    <property type="match status" value="1"/>
</dbReference>
<dbReference type="PANTHER" id="PTHR34701:SF1">
    <property type="entry name" value="TRANSCRIPTIONAL REGULATOR MRAZ"/>
    <property type="match status" value="1"/>
</dbReference>
<dbReference type="Pfam" id="PF02381">
    <property type="entry name" value="MraZ"/>
    <property type="match status" value="2"/>
</dbReference>
<dbReference type="SUPFAM" id="SSF89447">
    <property type="entry name" value="AbrB/MazE/MraZ-like"/>
    <property type="match status" value="1"/>
</dbReference>
<dbReference type="PROSITE" id="PS51740">
    <property type="entry name" value="SPOVT_ABRB"/>
    <property type="match status" value="2"/>
</dbReference>
<sequence length="148" mass="16640">MFQGETAITLDDKGRMVVPVVYRDLIARMSANRLVLTYNPFEAGCLWLYVEKEWERVRDELMVKPNAHRVVRVLQQKLVGSSALLELDANGRISVPSSHRSAVAIEKKAVLLGMGDKFELWSEQAHHALIQQTLSDGDLGDGLLDLRL</sequence>
<gene>
    <name evidence="1" type="primary">mraZ</name>
    <name type="ordered locus">PD_1874</name>
</gene>
<organism>
    <name type="scientific">Xylella fastidiosa (strain Temecula1 / ATCC 700964)</name>
    <dbReference type="NCBI Taxonomy" id="183190"/>
    <lineage>
        <taxon>Bacteria</taxon>
        <taxon>Pseudomonadati</taxon>
        <taxon>Pseudomonadota</taxon>
        <taxon>Gammaproteobacteria</taxon>
        <taxon>Lysobacterales</taxon>
        <taxon>Lysobacteraceae</taxon>
        <taxon>Xylella</taxon>
    </lineage>
</organism>
<accession>Q87AF1</accession>
<proteinExistence type="inferred from homology"/>
<comment type="subunit">
    <text evidence="1">Forms oligomers.</text>
</comment>
<comment type="subcellular location">
    <subcellularLocation>
        <location evidence="1">Cytoplasm</location>
        <location evidence="1">Nucleoid</location>
    </subcellularLocation>
</comment>
<comment type="similarity">
    <text evidence="1">Belongs to the MraZ family.</text>
</comment>
<evidence type="ECO:0000255" key="1">
    <source>
        <dbReference type="HAMAP-Rule" id="MF_01008"/>
    </source>
</evidence>
<evidence type="ECO:0000255" key="2">
    <source>
        <dbReference type="PROSITE-ProRule" id="PRU01076"/>
    </source>
</evidence>
<feature type="chain" id="PRO_0000108560" description="Transcriptional regulator MraZ">
    <location>
        <begin position="1"/>
        <end position="148"/>
    </location>
</feature>
<feature type="domain" description="SpoVT-AbrB 1" evidence="2">
    <location>
        <begin position="5"/>
        <end position="53"/>
    </location>
</feature>
<feature type="domain" description="SpoVT-AbrB 2" evidence="2">
    <location>
        <begin position="82"/>
        <end position="125"/>
    </location>
</feature>